<sequence>MAVKIRLKRMGKIRDPRYRVVVVDSRKKRDGRVIEEVGVYQPTENPSYINLVSDRVQYWLGVGAQPSEAVLALMKITGDWQKFKGLPGAEGTLRQPEGKTPFVAPDNGSVIIPEAITPKAEKAEEAPAEDAAPAEDDAEKAE</sequence>
<accession>B2GFY1</accession>
<organism>
    <name type="scientific">Kocuria rhizophila (strain ATCC 9341 / DSM 348 / NBRC 103217 / DC2201)</name>
    <dbReference type="NCBI Taxonomy" id="378753"/>
    <lineage>
        <taxon>Bacteria</taxon>
        <taxon>Bacillati</taxon>
        <taxon>Actinomycetota</taxon>
        <taxon>Actinomycetes</taxon>
        <taxon>Micrococcales</taxon>
        <taxon>Micrococcaceae</taxon>
        <taxon>Kocuria</taxon>
    </lineage>
</organism>
<proteinExistence type="inferred from homology"/>
<comment type="similarity">
    <text evidence="1">Belongs to the bacterial ribosomal protein bS16 family.</text>
</comment>
<gene>
    <name evidence="1" type="primary">rpsP</name>
    <name type="ordered locus">KRH_10620</name>
</gene>
<reference key="1">
    <citation type="journal article" date="2008" name="J. Bacteriol.">
        <title>Complete genome sequence of the soil actinomycete Kocuria rhizophila.</title>
        <authorList>
            <person name="Takarada H."/>
            <person name="Sekine M."/>
            <person name="Kosugi H."/>
            <person name="Matsuo Y."/>
            <person name="Fujisawa T."/>
            <person name="Omata S."/>
            <person name="Kishi E."/>
            <person name="Shimizu A."/>
            <person name="Tsukatani N."/>
            <person name="Tanikawa S."/>
            <person name="Fujita N."/>
            <person name="Harayama S."/>
        </authorList>
    </citation>
    <scope>NUCLEOTIDE SEQUENCE [LARGE SCALE GENOMIC DNA]</scope>
    <source>
        <strain>ATCC 9341 / DSM 348 / NBRC 103217 / DC2201</strain>
    </source>
</reference>
<feature type="chain" id="PRO_1000196421" description="Small ribosomal subunit protein bS16">
    <location>
        <begin position="1"/>
        <end position="142"/>
    </location>
</feature>
<feature type="region of interest" description="Disordered" evidence="2">
    <location>
        <begin position="88"/>
        <end position="142"/>
    </location>
</feature>
<feature type="compositionally biased region" description="Acidic residues" evidence="2">
    <location>
        <begin position="126"/>
        <end position="142"/>
    </location>
</feature>
<protein>
    <recommendedName>
        <fullName evidence="1">Small ribosomal subunit protein bS16</fullName>
    </recommendedName>
    <alternativeName>
        <fullName evidence="3">30S ribosomal protein S16</fullName>
    </alternativeName>
</protein>
<dbReference type="EMBL" id="AP009152">
    <property type="protein sequence ID" value="BAG29409.1"/>
    <property type="molecule type" value="Genomic_DNA"/>
</dbReference>
<dbReference type="RefSeq" id="WP_012398130.1">
    <property type="nucleotide sequence ID" value="NC_010617.1"/>
</dbReference>
<dbReference type="SMR" id="B2GFY1"/>
<dbReference type="STRING" id="378753.KRH_10620"/>
<dbReference type="KEGG" id="krh:KRH_10620"/>
<dbReference type="eggNOG" id="COG0228">
    <property type="taxonomic scope" value="Bacteria"/>
</dbReference>
<dbReference type="HOGENOM" id="CLU_100590_1_0_11"/>
<dbReference type="OrthoDB" id="9807878at2"/>
<dbReference type="Proteomes" id="UP000008838">
    <property type="component" value="Chromosome"/>
</dbReference>
<dbReference type="GO" id="GO:0005737">
    <property type="term" value="C:cytoplasm"/>
    <property type="evidence" value="ECO:0007669"/>
    <property type="project" value="UniProtKB-ARBA"/>
</dbReference>
<dbReference type="GO" id="GO:0015935">
    <property type="term" value="C:small ribosomal subunit"/>
    <property type="evidence" value="ECO:0007669"/>
    <property type="project" value="TreeGrafter"/>
</dbReference>
<dbReference type="GO" id="GO:0003735">
    <property type="term" value="F:structural constituent of ribosome"/>
    <property type="evidence" value="ECO:0007669"/>
    <property type="project" value="InterPro"/>
</dbReference>
<dbReference type="GO" id="GO:0006412">
    <property type="term" value="P:translation"/>
    <property type="evidence" value="ECO:0007669"/>
    <property type="project" value="UniProtKB-UniRule"/>
</dbReference>
<dbReference type="Gene3D" id="3.30.1320.10">
    <property type="match status" value="1"/>
</dbReference>
<dbReference type="HAMAP" id="MF_00385">
    <property type="entry name" value="Ribosomal_bS16"/>
    <property type="match status" value="1"/>
</dbReference>
<dbReference type="InterPro" id="IPR000307">
    <property type="entry name" value="Ribosomal_bS16"/>
</dbReference>
<dbReference type="InterPro" id="IPR020592">
    <property type="entry name" value="Ribosomal_bS16_CS"/>
</dbReference>
<dbReference type="InterPro" id="IPR023803">
    <property type="entry name" value="Ribosomal_bS16_dom_sf"/>
</dbReference>
<dbReference type="NCBIfam" id="NF011093">
    <property type="entry name" value="PRK14520.1"/>
    <property type="match status" value="1"/>
</dbReference>
<dbReference type="NCBIfam" id="TIGR00002">
    <property type="entry name" value="S16"/>
    <property type="match status" value="1"/>
</dbReference>
<dbReference type="PANTHER" id="PTHR12919">
    <property type="entry name" value="30S RIBOSOMAL PROTEIN S16"/>
    <property type="match status" value="1"/>
</dbReference>
<dbReference type="PANTHER" id="PTHR12919:SF20">
    <property type="entry name" value="SMALL RIBOSOMAL SUBUNIT PROTEIN BS16M"/>
    <property type="match status" value="1"/>
</dbReference>
<dbReference type="Pfam" id="PF00886">
    <property type="entry name" value="Ribosomal_S16"/>
    <property type="match status" value="1"/>
</dbReference>
<dbReference type="SUPFAM" id="SSF54565">
    <property type="entry name" value="Ribosomal protein S16"/>
    <property type="match status" value="1"/>
</dbReference>
<dbReference type="PROSITE" id="PS00732">
    <property type="entry name" value="RIBOSOMAL_S16"/>
    <property type="match status" value="1"/>
</dbReference>
<keyword id="KW-1185">Reference proteome</keyword>
<keyword id="KW-0687">Ribonucleoprotein</keyword>
<keyword id="KW-0689">Ribosomal protein</keyword>
<name>RS16_KOCRD</name>
<evidence type="ECO:0000255" key="1">
    <source>
        <dbReference type="HAMAP-Rule" id="MF_00385"/>
    </source>
</evidence>
<evidence type="ECO:0000256" key="2">
    <source>
        <dbReference type="SAM" id="MobiDB-lite"/>
    </source>
</evidence>
<evidence type="ECO:0000305" key="3"/>